<proteinExistence type="evidence at protein level"/>
<sequence length="11" mass="1228">PAPESNFVRDP</sequence>
<accession>B0M2U0</accession>
<evidence type="ECO:0000250" key="1">
    <source>
        <dbReference type="UniProtKB" id="P34405"/>
    </source>
</evidence>
<evidence type="ECO:0000255" key="2"/>
<evidence type="ECO:0000269" key="3">
    <source>
    </source>
</evidence>
<evidence type="ECO:0000303" key="4">
    <source>
    </source>
</evidence>
<evidence type="ECO:0000305" key="5"/>
<evidence type="ECO:0000305" key="6">
    <source>
    </source>
</evidence>
<organism>
    <name type="scientific">Namaquaphasma ookiepense</name>
    <name type="common">Gladiator bug</name>
    <dbReference type="NCBI Taxonomy" id="409167"/>
    <lineage>
        <taxon>Eukaryota</taxon>
        <taxon>Metazoa</taxon>
        <taxon>Ecdysozoa</taxon>
        <taxon>Arthropoda</taxon>
        <taxon>Hexapoda</taxon>
        <taxon>Insecta</taxon>
        <taxon>Pterygota</taxon>
        <taxon>Neoptera</taxon>
        <taxon>Polyneoptera</taxon>
        <taxon>Mantophasmatodea</taxon>
        <taxon>Austrophasmatidae</taxon>
        <taxon>Namaquaphasma</taxon>
    </lineage>
</organism>
<feature type="peptide" id="PRO_0000420505" description="Extended FMRFamide-10" evidence="3">
    <location>
        <begin position="1"/>
        <end position="11"/>
    </location>
</feature>
<name>FAR10_NAMOO</name>
<reference evidence="5" key="1">
    <citation type="journal article" date="2012" name="Syst. Biol.">
        <title>Peptidomics-based phylogeny and biogeography of Mantophasmatodea (Hexapoda).</title>
        <authorList>
            <person name="Predel R."/>
            <person name="Neupert S."/>
            <person name="Huetteroth W."/>
            <person name="Kahnt J."/>
            <person name="Waidelich D."/>
            <person name="Roth S."/>
        </authorList>
    </citation>
    <scope>PROTEIN SEQUENCE</scope>
    <source>
        <tissue evidence="3">Thoracic perisympathetic organs</tissue>
    </source>
</reference>
<keyword id="KW-0903">Direct protein sequencing</keyword>
<keyword id="KW-0527">Neuropeptide</keyword>
<keyword id="KW-0964">Secreted</keyword>
<dbReference type="GO" id="GO:0005576">
    <property type="term" value="C:extracellular region"/>
    <property type="evidence" value="ECO:0007669"/>
    <property type="project" value="UniProtKB-SubCell"/>
</dbReference>
<dbReference type="GO" id="GO:0007218">
    <property type="term" value="P:neuropeptide signaling pathway"/>
    <property type="evidence" value="ECO:0007669"/>
    <property type="project" value="UniProtKB-KW"/>
</dbReference>
<comment type="function">
    <text evidence="1">FMRFamides and FMRFamide-like peptides are neuropeptides.</text>
</comment>
<comment type="subcellular location">
    <subcellularLocation>
        <location evidence="6">Secreted</location>
    </subcellularLocation>
</comment>
<comment type="similarity">
    <text evidence="2">Belongs to the FARP (FMRF amide related peptide) family.</text>
</comment>
<protein>
    <recommendedName>
        <fullName evidence="4">Extended FMRFamide-10</fullName>
        <shortName evidence="4">FMRFa-10</shortName>
    </recommendedName>
</protein>